<protein>
    <recommendedName>
        <fullName evidence="1">Sec-independent protein translocase protein TatB</fullName>
    </recommendedName>
</protein>
<accession>Q0BIV8</accession>
<evidence type="ECO:0000255" key="1">
    <source>
        <dbReference type="HAMAP-Rule" id="MF_00237"/>
    </source>
</evidence>
<evidence type="ECO:0000256" key="2">
    <source>
        <dbReference type="SAM" id="MobiDB-lite"/>
    </source>
</evidence>
<dbReference type="EMBL" id="CP000440">
    <property type="protein sequence ID" value="ABI85915.1"/>
    <property type="molecule type" value="Genomic_DNA"/>
</dbReference>
<dbReference type="RefSeq" id="WP_006751794.1">
    <property type="nucleotide sequence ID" value="NZ_CP009798.1"/>
</dbReference>
<dbReference type="SMR" id="Q0BIV8"/>
<dbReference type="GeneID" id="93084231"/>
<dbReference type="KEGG" id="bam:Bamb_0355"/>
<dbReference type="PATRIC" id="fig|339670.21.peg.1263"/>
<dbReference type="eggNOG" id="COG1826">
    <property type="taxonomic scope" value="Bacteria"/>
</dbReference>
<dbReference type="Proteomes" id="UP000000662">
    <property type="component" value="Chromosome 1"/>
</dbReference>
<dbReference type="GO" id="GO:0033281">
    <property type="term" value="C:TAT protein transport complex"/>
    <property type="evidence" value="ECO:0007669"/>
    <property type="project" value="UniProtKB-UniRule"/>
</dbReference>
<dbReference type="GO" id="GO:0008320">
    <property type="term" value="F:protein transmembrane transporter activity"/>
    <property type="evidence" value="ECO:0007669"/>
    <property type="project" value="UniProtKB-UniRule"/>
</dbReference>
<dbReference type="GO" id="GO:0043953">
    <property type="term" value="P:protein transport by the Tat complex"/>
    <property type="evidence" value="ECO:0007669"/>
    <property type="project" value="UniProtKB-UniRule"/>
</dbReference>
<dbReference type="Gene3D" id="1.20.5.3310">
    <property type="match status" value="1"/>
</dbReference>
<dbReference type="HAMAP" id="MF_00237">
    <property type="entry name" value="TatB"/>
    <property type="match status" value="1"/>
</dbReference>
<dbReference type="InterPro" id="IPR003369">
    <property type="entry name" value="TatA/B/E"/>
</dbReference>
<dbReference type="InterPro" id="IPR018448">
    <property type="entry name" value="TatB"/>
</dbReference>
<dbReference type="NCBIfam" id="TIGR01410">
    <property type="entry name" value="tatB"/>
    <property type="match status" value="1"/>
</dbReference>
<dbReference type="PANTHER" id="PTHR33162">
    <property type="entry name" value="SEC-INDEPENDENT PROTEIN TRANSLOCASE PROTEIN TATA, CHLOROPLASTIC"/>
    <property type="match status" value="1"/>
</dbReference>
<dbReference type="PANTHER" id="PTHR33162:SF1">
    <property type="entry name" value="SEC-INDEPENDENT PROTEIN TRANSLOCASE PROTEIN TATA, CHLOROPLASTIC"/>
    <property type="match status" value="1"/>
</dbReference>
<dbReference type="Pfam" id="PF02416">
    <property type="entry name" value="TatA_B_E"/>
    <property type="match status" value="1"/>
</dbReference>
<dbReference type="PRINTS" id="PR01506">
    <property type="entry name" value="TATBPROTEIN"/>
</dbReference>
<comment type="function">
    <text evidence="1">Part of the twin-arginine translocation (Tat) system that transports large folded proteins containing a characteristic twin-arginine motif in their signal peptide across membranes. Together with TatC, TatB is part of a receptor directly interacting with Tat signal peptides. TatB may form an oligomeric binding site that transiently accommodates folded Tat precursor proteins before their translocation.</text>
</comment>
<comment type="subunit">
    <text evidence="1">The Tat system comprises two distinct complexes: a TatABC complex, containing multiple copies of TatA, TatB and TatC subunits, and a separate TatA complex, containing only TatA subunits. Substrates initially bind to the TatABC complex, which probably triggers association of the separate TatA complex to form the active translocon.</text>
</comment>
<comment type="subcellular location">
    <subcellularLocation>
        <location evidence="1">Cell inner membrane</location>
        <topology evidence="1">Single-pass membrane protein</topology>
    </subcellularLocation>
</comment>
<comment type="similarity">
    <text evidence="1">Belongs to the TatB family.</text>
</comment>
<organism>
    <name type="scientific">Burkholderia ambifaria (strain ATCC BAA-244 / DSM 16087 / CCUG 44356 / LMG 19182 / AMMD)</name>
    <name type="common">Burkholderia cepacia (strain AMMD)</name>
    <dbReference type="NCBI Taxonomy" id="339670"/>
    <lineage>
        <taxon>Bacteria</taxon>
        <taxon>Pseudomonadati</taxon>
        <taxon>Pseudomonadota</taxon>
        <taxon>Betaproteobacteria</taxon>
        <taxon>Burkholderiales</taxon>
        <taxon>Burkholderiaceae</taxon>
        <taxon>Burkholderia</taxon>
        <taxon>Burkholderia cepacia complex</taxon>
    </lineage>
</organism>
<sequence length="176" mass="19569">MLDLGLSKMALIGVVALVVLGPERLPRVARTAGALFGRAQRYINDVKSEVSREIELDALRTMKTDFESAARNVETTIHDNLREHEKELNDTWHSAVGGLNEGSVDAGTYGSDTPAAPSWRGSTAALARKRRNWRVKQAAMPVWYKRATTRRTHVQSGAARVARHQPASLRRPTRFL</sequence>
<feature type="chain" id="PRO_0000301151" description="Sec-independent protein translocase protein TatB">
    <location>
        <begin position="1"/>
        <end position="176"/>
    </location>
</feature>
<feature type="transmembrane region" description="Helical" evidence="1">
    <location>
        <begin position="1"/>
        <end position="21"/>
    </location>
</feature>
<feature type="region of interest" description="Disordered" evidence="2">
    <location>
        <begin position="155"/>
        <end position="176"/>
    </location>
</feature>
<gene>
    <name evidence="1" type="primary">tatB</name>
    <name type="ordered locus">Bamb_0355</name>
</gene>
<name>TATB_BURCM</name>
<keyword id="KW-0997">Cell inner membrane</keyword>
<keyword id="KW-1003">Cell membrane</keyword>
<keyword id="KW-0472">Membrane</keyword>
<keyword id="KW-0653">Protein transport</keyword>
<keyword id="KW-0811">Translocation</keyword>
<keyword id="KW-0812">Transmembrane</keyword>
<keyword id="KW-1133">Transmembrane helix</keyword>
<keyword id="KW-0813">Transport</keyword>
<proteinExistence type="inferred from homology"/>
<reference key="1">
    <citation type="submission" date="2006-08" db="EMBL/GenBank/DDBJ databases">
        <title>Complete sequence of chromosome 1 of Burkholderia cepacia AMMD.</title>
        <authorList>
            <person name="Copeland A."/>
            <person name="Lucas S."/>
            <person name="Lapidus A."/>
            <person name="Barry K."/>
            <person name="Detter J.C."/>
            <person name="Glavina del Rio T."/>
            <person name="Hammon N."/>
            <person name="Israni S."/>
            <person name="Pitluck S."/>
            <person name="Bruce D."/>
            <person name="Chain P."/>
            <person name="Malfatti S."/>
            <person name="Shin M."/>
            <person name="Vergez L."/>
            <person name="Schmutz J."/>
            <person name="Larimer F."/>
            <person name="Land M."/>
            <person name="Hauser L."/>
            <person name="Kyrpides N."/>
            <person name="Kim E."/>
            <person name="Parke J."/>
            <person name="Coenye T."/>
            <person name="Konstantinidis K."/>
            <person name="Ramette A."/>
            <person name="Tiedje J."/>
            <person name="Richardson P."/>
        </authorList>
    </citation>
    <scope>NUCLEOTIDE SEQUENCE [LARGE SCALE GENOMIC DNA]</scope>
    <source>
        <strain>ATCC BAA-244 / DSM 16087 / CCUG 44356 / LMG 19182 / AMMD</strain>
    </source>
</reference>